<keyword id="KW-0066">ATP synthesis</keyword>
<keyword id="KW-1003">Cell membrane</keyword>
<keyword id="KW-0139">CF(1)</keyword>
<keyword id="KW-0375">Hydrogen ion transport</keyword>
<keyword id="KW-0406">Ion transport</keyword>
<keyword id="KW-0472">Membrane</keyword>
<keyword id="KW-0813">Transport</keyword>
<organism>
    <name type="scientific">Listeria monocytogenes serotype 4b (strain F2365)</name>
    <dbReference type="NCBI Taxonomy" id="265669"/>
    <lineage>
        <taxon>Bacteria</taxon>
        <taxon>Bacillati</taxon>
        <taxon>Bacillota</taxon>
        <taxon>Bacilli</taxon>
        <taxon>Bacillales</taxon>
        <taxon>Listeriaceae</taxon>
        <taxon>Listeria</taxon>
    </lineage>
</organism>
<accession>Q71WP8</accession>
<proteinExistence type="inferred from homology"/>
<protein>
    <recommendedName>
        <fullName evidence="1">ATP synthase gamma chain</fullName>
    </recommendedName>
    <alternativeName>
        <fullName evidence="1">ATP synthase F1 sector gamma subunit</fullName>
    </alternativeName>
    <alternativeName>
        <fullName evidence="1">F-ATPase gamma subunit</fullName>
    </alternativeName>
</protein>
<gene>
    <name evidence="1" type="primary">atpG</name>
    <name type="ordered locus">LMOf2365_2503</name>
</gene>
<dbReference type="EMBL" id="AE017262">
    <property type="protein sequence ID" value="AAT05268.1"/>
    <property type="molecule type" value="Genomic_DNA"/>
</dbReference>
<dbReference type="RefSeq" id="WP_003723463.1">
    <property type="nucleotide sequence ID" value="NC_002973.6"/>
</dbReference>
<dbReference type="SMR" id="Q71WP8"/>
<dbReference type="KEGG" id="lmf:LMOf2365_2503"/>
<dbReference type="HOGENOM" id="CLU_050669_0_1_9"/>
<dbReference type="GO" id="GO:0005886">
    <property type="term" value="C:plasma membrane"/>
    <property type="evidence" value="ECO:0007669"/>
    <property type="project" value="UniProtKB-SubCell"/>
</dbReference>
<dbReference type="GO" id="GO:0045259">
    <property type="term" value="C:proton-transporting ATP synthase complex"/>
    <property type="evidence" value="ECO:0007669"/>
    <property type="project" value="UniProtKB-KW"/>
</dbReference>
<dbReference type="GO" id="GO:0005524">
    <property type="term" value="F:ATP binding"/>
    <property type="evidence" value="ECO:0007669"/>
    <property type="project" value="UniProtKB-UniRule"/>
</dbReference>
<dbReference type="GO" id="GO:0046933">
    <property type="term" value="F:proton-transporting ATP synthase activity, rotational mechanism"/>
    <property type="evidence" value="ECO:0007669"/>
    <property type="project" value="UniProtKB-UniRule"/>
</dbReference>
<dbReference type="GO" id="GO:0042777">
    <property type="term" value="P:proton motive force-driven plasma membrane ATP synthesis"/>
    <property type="evidence" value="ECO:0007669"/>
    <property type="project" value="UniProtKB-UniRule"/>
</dbReference>
<dbReference type="CDD" id="cd12151">
    <property type="entry name" value="F1-ATPase_gamma"/>
    <property type="match status" value="1"/>
</dbReference>
<dbReference type="FunFam" id="1.10.287.80:FF:000010">
    <property type="entry name" value="ATP synthase gamma chain"/>
    <property type="match status" value="1"/>
</dbReference>
<dbReference type="FunFam" id="3.40.1380.10:FF:000002">
    <property type="entry name" value="ATP synthase gamma chain"/>
    <property type="match status" value="1"/>
</dbReference>
<dbReference type="Gene3D" id="3.40.1380.10">
    <property type="match status" value="1"/>
</dbReference>
<dbReference type="Gene3D" id="1.10.287.80">
    <property type="entry name" value="ATP synthase, gamma subunit, helix hairpin domain"/>
    <property type="match status" value="1"/>
</dbReference>
<dbReference type="HAMAP" id="MF_00815">
    <property type="entry name" value="ATP_synth_gamma_bact"/>
    <property type="match status" value="1"/>
</dbReference>
<dbReference type="InterPro" id="IPR035968">
    <property type="entry name" value="ATP_synth_F1_ATPase_gsu"/>
</dbReference>
<dbReference type="InterPro" id="IPR000131">
    <property type="entry name" value="ATP_synth_F1_gsu"/>
</dbReference>
<dbReference type="InterPro" id="IPR023632">
    <property type="entry name" value="ATP_synth_F1_gsu_CS"/>
</dbReference>
<dbReference type="NCBIfam" id="TIGR01146">
    <property type="entry name" value="ATPsyn_F1gamma"/>
    <property type="match status" value="1"/>
</dbReference>
<dbReference type="NCBIfam" id="NF004147">
    <property type="entry name" value="PRK05621.2-1"/>
    <property type="match status" value="1"/>
</dbReference>
<dbReference type="PANTHER" id="PTHR11693">
    <property type="entry name" value="ATP SYNTHASE GAMMA CHAIN"/>
    <property type="match status" value="1"/>
</dbReference>
<dbReference type="PANTHER" id="PTHR11693:SF22">
    <property type="entry name" value="ATP SYNTHASE SUBUNIT GAMMA, MITOCHONDRIAL"/>
    <property type="match status" value="1"/>
</dbReference>
<dbReference type="Pfam" id="PF00231">
    <property type="entry name" value="ATP-synt"/>
    <property type="match status" value="1"/>
</dbReference>
<dbReference type="PRINTS" id="PR00126">
    <property type="entry name" value="ATPASEGAMMA"/>
</dbReference>
<dbReference type="SUPFAM" id="SSF52943">
    <property type="entry name" value="ATP synthase (F1-ATPase), gamma subunit"/>
    <property type="match status" value="1"/>
</dbReference>
<dbReference type="PROSITE" id="PS00153">
    <property type="entry name" value="ATPASE_GAMMA"/>
    <property type="match status" value="1"/>
</dbReference>
<comment type="function">
    <text evidence="1">Produces ATP from ADP in the presence of a proton gradient across the membrane. The gamma chain is believed to be important in regulating ATPase activity and the flow of protons through the CF(0) complex.</text>
</comment>
<comment type="subunit">
    <text evidence="1">F-type ATPases have 2 components, CF(1) - the catalytic core - and CF(0) - the membrane proton channel. CF(1) has five subunits: alpha(3), beta(3), gamma(1), delta(1), epsilon(1). CF(0) has three main subunits: a, b and c.</text>
</comment>
<comment type="subcellular location">
    <subcellularLocation>
        <location evidence="1">Cell membrane</location>
        <topology evidence="1">Peripheral membrane protein</topology>
    </subcellularLocation>
</comment>
<comment type="similarity">
    <text evidence="1">Belongs to the ATPase gamma chain family.</text>
</comment>
<feature type="chain" id="PRO_0000073310" description="ATP synthase gamma chain">
    <location>
        <begin position="1"/>
        <end position="290"/>
    </location>
</feature>
<evidence type="ECO:0000255" key="1">
    <source>
        <dbReference type="HAMAP-Rule" id="MF_00815"/>
    </source>
</evidence>
<name>ATPG_LISMF</name>
<reference key="1">
    <citation type="journal article" date="2004" name="Nucleic Acids Res.">
        <title>Whole genome comparisons of serotype 4b and 1/2a strains of the food-borne pathogen Listeria monocytogenes reveal new insights into the core genome components of this species.</title>
        <authorList>
            <person name="Nelson K.E."/>
            <person name="Fouts D.E."/>
            <person name="Mongodin E.F."/>
            <person name="Ravel J."/>
            <person name="DeBoy R.T."/>
            <person name="Kolonay J.F."/>
            <person name="Rasko D.A."/>
            <person name="Angiuoli S.V."/>
            <person name="Gill S.R."/>
            <person name="Paulsen I.T."/>
            <person name="Peterson J.D."/>
            <person name="White O."/>
            <person name="Nelson W.C."/>
            <person name="Nierman W.C."/>
            <person name="Beanan M.J."/>
            <person name="Brinkac L.M."/>
            <person name="Daugherty S.C."/>
            <person name="Dodson R.J."/>
            <person name="Durkin A.S."/>
            <person name="Madupu R."/>
            <person name="Haft D.H."/>
            <person name="Selengut J."/>
            <person name="Van Aken S.E."/>
            <person name="Khouri H.M."/>
            <person name="Fedorova N."/>
            <person name="Forberger H.A."/>
            <person name="Tran B."/>
            <person name="Kathariou S."/>
            <person name="Wonderling L.D."/>
            <person name="Uhlich G.A."/>
            <person name="Bayles D.O."/>
            <person name="Luchansky J.B."/>
            <person name="Fraser C.M."/>
        </authorList>
    </citation>
    <scope>NUCLEOTIDE SEQUENCE [LARGE SCALE GENOMIC DNA]</scope>
    <source>
        <strain>F2365</strain>
    </source>
</reference>
<sequence>MASLIDIKQRITSTRKTSQITKAMQMVSAAKLGRAESNARSYEPYVSKIKDVVTHVASTGNSSDHPMLVSRPVHRTGYIVLTSDTGLAGSYNSSVIKEVFQEINKKHTSSDEYAIITVGRSARDFFKARQMNVVLEVQGITDHPIFAEIKDIASNTVQMFEDGVYDEVFIYYNHHINSISSELRKEQLLPLTEFHEKGKETDVDLTTYEFEPSEQEILEVLLPQYVESLIFGALLDAKAAEHAARMTAMRSATDNASDLISDLSLQYNRARQAAITQEITEIVGGAAALE</sequence>